<organism>
    <name type="scientific">Pyrococcus endeavori</name>
    <dbReference type="NCBI Taxonomy" id="39456"/>
    <lineage>
        <taxon>Archaea</taxon>
        <taxon>Methanobacteriati</taxon>
        <taxon>Methanobacteriota</taxon>
        <taxon>Thermococci</taxon>
        <taxon>Thermococcales</taxon>
        <taxon>Thermococcaceae</taxon>
        <taxon>Pyrococcus</taxon>
    </lineage>
</organism>
<accession>Q47951</accession>
<reference key="1">
    <citation type="journal article" date="1993" name="J. Biol. Chem.">
        <title>Characterization, cloning, and in vitro expression of the extremely thermostable glutamate dehydrogenase from the hyperthermophilic Archaeon, ES4.</title>
        <authorList>
            <person name="Diruggiero J."/>
            <person name="Robb F.T."/>
            <person name="Jagus R."/>
            <person name="Klump H.H."/>
            <person name="Borges K.M."/>
            <person name="Kessel M."/>
            <person name="Mai X."/>
            <person name="Adams M.W.W.A."/>
        </authorList>
    </citation>
    <scope>NUCLEOTIDE SEQUENCE [GENOMIC DNA]</scope>
    <scope>PARTIAL PROTEIN SEQUENCE</scope>
    <scope>CHARACTERIZATION</scope>
    <source>
        <strain>ES4</strain>
    </source>
</reference>
<keyword id="KW-0963">Cytoplasm</keyword>
<keyword id="KW-0903">Direct protein sequencing</keyword>
<keyword id="KW-0520">NAD</keyword>
<keyword id="KW-0521">NADP</keyword>
<keyword id="KW-0560">Oxidoreductase</keyword>
<name>DHE3_PYREN</name>
<dbReference type="EC" id="1.4.1.3"/>
<dbReference type="EMBL" id="L12408">
    <property type="protein sequence ID" value="AAA64795.1"/>
    <property type="molecule type" value="Genomic_DNA"/>
</dbReference>
<dbReference type="PIR" id="A47410">
    <property type="entry name" value="A47410"/>
</dbReference>
<dbReference type="SMR" id="Q47951"/>
<dbReference type="GO" id="GO:0005737">
    <property type="term" value="C:cytoplasm"/>
    <property type="evidence" value="ECO:0007669"/>
    <property type="project" value="UniProtKB-SubCell"/>
</dbReference>
<dbReference type="GO" id="GO:0004352">
    <property type="term" value="F:glutamate dehydrogenase (NAD+) activity"/>
    <property type="evidence" value="ECO:0007669"/>
    <property type="project" value="RHEA"/>
</dbReference>
<dbReference type="GO" id="GO:0004354">
    <property type="term" value="F:glutamate dehydrogenase (NADP+) activity"/>
    <property type="evidence" value="ECO:0007669"/>
    <property type="project" value="RHEA"/>
</dbReference>
<dbReference type="GO" id="GO:0006538">
    <property type="term" value="P:glutamate catabolic process"/>
    <property type="evidence" value="ECO:0007669"/>
    <property type="project" value="TreeGrafter"/>
</dbReference>
<dbReference type="CDD" id="cd01076">
    <property type="entry name" value="NAD_bind_1_Glu_DH"/>
    <property type="match status" value="1"/>
</dbReference>
<dbReference type="FunFam" id="3.40.50.10860:FF:000003">
    <property type="entry name" value="Glutamate dehydrogenase"/>
    <property type="match status" value="1"/>
</dbReference>
<dbReference type="Gene3D" id="3.40.50.10860">
    <property type="entry name" value="Leucine Dehydrogenase, chain A, domain 1"/>
    <property type="match status" value="1"/>
</dbReference>
<dbReference type="Gene3D" id="3.40.50.720">
    <property type="entry name" value="NAD(P)-binding Rossmann-like Domain"/>
    <property type="match status" value="1"/>
</dbReference>
<dbReference type="InterPro" id="IPR046346">
    <property type="entry name" value="Aminoacid_DH-like_N_sf"/>
</dbReference>
<dbReference type="InterPro" id="IPR053388">
    <property type="entry name" value="GLPV_dehydrogenases"/>
</dbReference>
<dbReference type="InterPro" id="IPR006095">
    <property type="entry name" value="Glu/Leu/Phe/Val/Trp_DH"/>
</dbReference>
<dbReference type="InterPro" id="IPR006096">
    <property type="entry name" value="Glu/Leu/Phe/Val/Trp_DH_C"/>
</dbReference>
<dbReference type="InterPro" id="IPR006097">
    <property type="entry name" value="Glu/Leu/Phe/Val/Trp_DH_dimer"/>
</dbReference>
<dbReference type="InterPro" id="IPR033524">
    <property type="entry name" value="Glu/Leu/Phe/Val_DH_AS"/>
</dbReference>
<dbReference type="InterPro" id="IPR014362">
    <property type="entry name" value="Glu_DH"/>
</dbReference>
<dbReference type="InterPro" id="IPR036291">
    <property type="entry name" value="NAD(P)-bd_dom_sf"/>
</dbReference>
<dbReference type="InterPro" id="IPR033922">
    <property type="entry name" value="NAD_bind_Glu_DH"/>
</dbReference>
<dbReference type="NCBIfam" id="NF040817">
    <property type="entry name" value="GdhA_Arch"/>
    <property type="match status" value="1"/>
</dbReference>
<dbReference type="PANTHER" id="PTHR11606">
    <property type="entry name" value="GLUTAMATE DEHYDROGENASE"/>
    <property type="match status" value="1"/>
</dbReference>
<dbReference type="PANTHER" id="PTHR11606:SF13">
    <property type="entry name" value="GLUTAMATE DEHYDROGENASE 1, MITOCHONDRIAL"/>
    <property type="match status" value="1"/>
</dbReference>
<dbReference type="Pfam" id="PF00208">
    <property type="entry name" value="ELFV_dehydrog"/>
    <property type="match status" value="1"/>
</dbReference>
<dbReference type="Pfam" id="PF02812">
    <property type="entry name" value="ELFV_dehydrog_N"/>
    <property type="match status" value="1"/>
</dbReference>
<dbReference type="PIRSF" id="PIRSF000185">
    <property type="entry name" value="Glu_DH"/>
    <property type="match status" value="1"/>
</dbReference>
<dbReference type="PRINTS" id="PR00082">
    <property type="entry name" value="GLFDHDRGNASE"/>
</dbReference>
<dbReference type="SMART" id="SM00839">
    <property type="entry name" value="ELFV_dehydrog"/>
    <property type="match status" value="1"/>
</dbReference>
<dbReference type="SUPFAM" id="SSF53223">
    <property type="entry name" value="Aminoacid dehydrogenase-like, N-terminal domain"/>
    <property type="match status" value="1"/>
</dbReference>
<dbReference type="SUPFAM" id="SSF51735">
    <property type="entry name" value="NAD(P)-binding Rossmann-fold domains"/>
    <property type="match status" value="1"/>
</dbReference>
<dbReference type="PROSITE" id="PS00074">
    <property type="entry name" value="GLFV_DEHYDROGENASE"/>
    <property type="match status" value="1"/>
</dbReference>
<comment type="catalytic activity">
    <reaction evidence="3">
        <text>L-glutamate + NAD(+) + H2O = 2-oxoglutarate + NH4(+) + NADH + H(+)</text>
        <dbReference type="Rhea" id="RHEA:15133"/>
        <dbReference type="ChEBI" id="CHEBI:15377"/>
        <dbReference type="ChEBI" id="CHEBI:15378"/>
        <dbReference type="ChEBI" id="CHEBI:16810"/>
        <dbReference type="ChEBI" id="CHEBI:28938"/>
        <dbReference type="ChEBI" id="CHEBI:29985"/>
        <dbReference type="ChEBI" id="CHEBI:57540"/>
        <dbReference type="ChEBI" id="CHEBI:57945"/>
        <dbReference type="EC" id="1.4.1.3"/>
    </reaction>
</comment>
<comment type="catalytic activity">
    <reaction evidence="3">
        <text>L-glutamate + NADP(+) + H2O = 2-oxoglutarate + NH4(+) + NADPH + H(+)</text>
        <dbReference type="Rhea" id="RHEA:11612"/>
        <dbReference type="ChEBI" id="CHEBI:15377"/>
        <dbReference type="ChEBI" id="CHEBI:15378"/>
        <dbReference type="ChEBI" id="CHEBI:16810"/>
        <dbReference type="ChEBI" id="CHEBI:28938"/>
        <dbReference type="ChEBI" id="CHEBI:29985"/>
        <dbReference type="ChEBI" id="CHEBI:57783"/>
        <dbReference type="ChEBI" id="CHEBI:58349"/>
        <dbReference type="EC" id="1.4.1.3"/>
    </reaction>
</comment>
<comment type="subunit">
    <text>Homohexamer.</text>
</comment>
<comment type="subcellular location">
    <subcellularLocation>
        <location evidence="1">Cytoplasm</location>
    </subcellularLocation>
</comment>
<comment type="similarity">
    <text evidence="4">Belongs to the Glu/Leu/Phe/Val dehydrogenases family.</text>
</comment>
<evidence type="ECO:0000250" key="1"/>
<evidence type="ECO:0000255" key="2"/>
<evidence type="ECO:0000255" key="3">
    <source>
        <dbReference type="PROSITE-ProRule" id="PRU10011"/>
    </source>
</evidence>
<evidence type="ECO:0000305" key="4"/>
<protein>
    <recommendedName>
        <fullName>Glutamate dehydrogenase</fullName>
        <shortName>GDH</shortName>
        <ecNumber>1.4.1.3</ecNumber>
    </recommendedName>
</protein>
<feature type="chain" id="PRO_0000182756" description="Glutamate dehydrogenase">
    <location>
        <begin position="1"/>
        <end position="420"/>
    </location>
</feature>
<feature type="active site" evidence="3">
    <location>
        <position position="105"/>
    </location>
</feature>
<feature type="binding site" evidence="2">
    <location>
        <begin position="220"/>
        <end position="226"/>
    </location>
    <ligand>
        <name>NAD(+)</name>
        <dbReference type="ChEBI" id="CHEBI:57540"/>
    </ligand>
</feature>
<proteinExistence type="evidence at protein level"/>
<gene>
    <name type="primary">gdhA</name>
</gene>
<sequence length="420" mass="47141">MVEQDPFEIAVKQLERAAQYMKISEEALEFLKRPQRIVEVTIPVEMDDGTVKVFTGFRVQYNWARGPTKGGIRWHPEETLSTVKALAAWMTWKTAVMDLPYGGGKGGIIVDPKKLSDREKERLARGYIRAIYDVISPYEDIPAPDVYTNPQIMAWMMDEYEAISRRKTPAFGIITGKPLSIGGSLGRNEATARGASYTIREARKVLGWGDLKGKTIAIQGYGNAGYYLAKIMSEDYGMKVVAVSDSKGGIYNPDGLNADEVLKWKQEHGSVKDFPGATNITNEELLELEVDVLAPAAIEEVITKKNADNIKAKIVAEVANGPVTPEADEILFEKGILQIPDFLCNAGGVTVSYFEWVQNITGYYWTLEEVREKLDKKMTKAFYDVYNTAKEKNIHMRDADYVVAVQRVYQAMLDRGWVKH</sequence>